<proteinExistence type="inferred from homology"/>
<name>MURQ_ALIFM</name>
<keyword id="KW-0119">Carbohydrate metabolism</keyword>
<keyword id="KW-0456">Lyase</keyword>
<gene>
    <name evidence="1" type="primary">murQ</name>
    <name type="ordered locus">VFMJ11_1192</name>
</gene>
<dbReference type="EC" id="4.2.1.126" evidence="1"/>
<dbReference type="EMBL" id="CP001139">
    <property type="protein sequence ID" value="ACH67247.1"/>
    <property type="molecule type" value="Genomic_DNA"/>
</dbReference>
<dbReference type="RefSeq" id="WP_012534300.1">
    <property type="nucleotide sequence ID" value="NC_011184.1"/>
</dbReference>
<dbReference type="SMR" id="B5FDJ8"/>
<dbReference type="KEGG" id="vfm:VFMJ11_1192"/>
<dbReference type="HOGENOM" id="CLU_049049_1_1_6"/>
<dbReference type="UniPathway" id="UPA00342"/>
<dbReference type="UniPathway" id="UPA00343"/>
<dbReference type="UniPathway" id="UPA00544"/>
<dbReference type="Proteomes" id="UP000001857">
    <property type="component" value="Chromosome I"/>
</dbReference>
<dbReference type="GO" id="GO:0097367">
    <property type="term" value="F:carbohydrate derivative binding"/>
    <property type="evidence" value="ECO:0007669"/>
    <property type="project" value="InterPro"/>
</dbReference>
<dbReference type="GO" id="GO:0016835">
    <property type="term" value="F:carbon-oxygen lyase activity"/>
    <property type="evidence" value="ECO:0007669"/>
    <property type="project" value="UniProtKB-UniRule"/>
</dbReference>
<dbReference type="GO" id="GO:0016803">
    <property type="term" value="F:ether hydrolase activity"/>
    <property type="evidence" value="ECO:0007669"/>
    <property type="project" value="TreeGrafter"/>
</dbReference>
<dbReference type="GO" id="GO:0097175">
    <property type="term" value="P:1,6-anhydro-N-acetyl-beta-muramic acid catabolic process"/>
    <property type="evidence" value="ECO:0007669"/>
    <property type="project" value="UniProtKB-UniRule"/>
</dbReference>
<dbReference type="GO" id="GO:0046348">
    <property type="term" value="P:amino sugar catabolic process"/>
    <property type="evidence" value="ECO:0007669"/>
    <property type="project" value="InterPro"/>
</dbReference>
<dbReference type="GO" id="GO:0097173">
    <property type="term" value="P:N-acetylmuramic acid catabolic process"/>
    <property type="evidence" value="ECO:0007669"/>
    <property type="project" value="UniProtKB-UniPathway"/>
</dbReference>
<dbReference type="GO" id="GO:0009254">
    <property type="term" value="P:peptidoglycan turnover"/>
    <property type="evidence" value="ECO:0007669"/>
    <property type="project" value="UniProtKB-UniRule"/>
</dbReference>
<dbReference type="CDD" id="cd05007">
    <property type="entry name" value="SIS_Etherase"/>
    <property type="match status" value="1"/>
</dbReference>
<dbReference type="FunFam" id="1.10.8.1080:FF:000001">
    <property type="entry name" value="N-acetylmuramic acid 6-phosphate etherase"/>
    <property type="match status" value="1"/>
</dbReference>
<dbReference type="FunFam" id="3.40.50.10490:FF:000014">
    <property type="entry name" value="N-acetylmuramic acid 6-phosphate etherase"/>
    <property type="match status" value="1"/>
</dbReference>
<dbReference type="Gene3D" id="1.10.8.1080">
    <property type="match status" value="1"/>
</dbReference>
<dbReference type="Gene3D" id="3.40.50.10490">
    <property type="entry name" value="Glucose-6-phosphate isomerase like protein, domain 1"/>
    <property type="match status" value="1"/>
</dbReference>
<dbReference type="HAMAP" id="MF_00068">
    <property type="entry name" value="MurQ"/>
    <property type="match status" value="1"/>
</dbReference>
<dbReference type="InterPro" id="IPR005488">
    <property type="entry name" value="Etherase_MurQ"/>
</dbReference>
<dbReference type="InterPro" id="IPR005486">
    <property type="entry name" value="Glucokinase_regulatory_CS"/>
</dbReference>
<dbReference type="InterPro" id="IPR040190">
    <property type="entry name" value="MURQ/GCKR"/>
</dbReference>
<dbReference type="InterPro" id="IPR001347">
    <property type="entry name" value="SIS_dom"/>
</dbReference>
<dbReference type="InterPro" id="IPR046348">
    <property type="entry name" value="SIS_dom_sf"/>
</dbReference>
<dbReference type="NCBIfam" id="TIGR00274">
    <property type="entry name" value="N-acetylmuramic acid 6-phosphate etherase"/>
    <property type="match status" value="1"/>
</dbReference>
<dbReference type="NCBIfam" id="NF003915">
    <property type="entry name" value="PRK05441.1"/>
    <property type="match status" value="1"/>
</dbReference>
<dbReference type="NCBIfam" id="NF009222">
    <property type="entry name" value="PRK12570.1"/>
    <property type="match status" value="1"/>
</dbReference>
<dbReference type="PANTHER" id="PTHR10088">
    <property type="entry name" value="GLUCOKINASE REGULATORY PROTEIN"/>
    <property type="match status" value="1"/>
</dbReference>
<dbReference type="PANTHER" id="PTHR10088:SF4">
    <property type="entry name" value="GLUCOKINASE REGULATORY PROTEIN"/>
    <property type="match status" value="1"/>
</dbReference>
<dbReference type="Pfam" id="PF22645">
    <property type="entry name" value="GKRP_SIS_N"/>
    <property type="match status" value="1"/>
</dbReference>
<dbReference type="SUPFAM" id="SSF53697">
    <property type="entry name" value="SIS domain"/>
    <property type="match status" value="1"/>
</dbReference>
<dbReference type="PROSITE" id="PS01272">
    <property type="entry name" value="GCKR"/>
    <property type="match status" value="1"/>
</dbReference>
<dbReference type="PROSITE" id="PS51464">
    <property type="entry name" value="SIS"/>
    <property type="match status" value="1"/>
</dbReference>
<protein>
    <recommendedName>
        <fullName evidence="1">N-acetylmuramic acid 6-phosphate etherase</fullName>
        <shortName evidence="1">MurNAc-6-P etherase</shortName>
        <ecNumber evidence="1">4.2.1.126</ecNumber>
    </recommendedName>
    <alternativeName>
        <fullName evidence="1">N-acetylmuramic acid 6-phosphate hydrolase</fullName>
    </alternativeName>
    <alternativeName>
        <fullName evidence="1">N-acetylmuramic acid 6-phosphate lyase</fullName>
    </alternativeName>
</protein>
<accession>B5FDJ8</accession>
<reference key="1">
    <citation type="submission" date="2008-08" db="EMBL/GenBank/DDBJ databases">
        <title>Complete sequence of Vibrio fischeri strain MJ11.</title>
        <authorList>
            <person name="Mandel M.J."/>
            <person name="Stabb E.V."/>
            <person name="Ruby E.G."/>
            <person name="Ferriera S."/>
            <person name="Johnson J."/>
            <person name="Kravitz S."/>
            <person name="Beeson K."/>
            <person name="Sutton G."/>
            <person name="Rogers Y.-H."/>
            <person name="Friedman R."/>
            <person name="Frazier M."/>
            <person name="Venter J.C."/>
        </authorList>
    </citation>
    <scope>NUCLEOTIDE SEQUENCE [LARGE SCALE GENOMIC DNA]</scope>
    <source>
        <strain>MJ11</strain>
    </source>
</reference>
<sequence>MKIDLTALVTESRNKASENIDVLSTVEMLTVINQEDQKVALAVEAILPQIADVVDAIAVAFQSGGRLIYTGAGTSGRLGILDASECPPTYGSNPDLVVGLIAGGHKAILKAVENAEDNRELGASDLQDLGLNEKDVLVGIAASGRTPYVLGAMEYAKSVGATVATLSCNPNSPMTELADINMTPVVGPEVVTGSSRMKAGTAQKLVLNMLTTGAMIRTGKVFGNLMVDVEATNAKLVQRQKNIVIEATGCSEVEASEALSQCDNHCKTAILMVLSGLDAQSAKAKLAQHNGFIRNALSDQ</sequence>
<organism>
    <name type="scientific">Aliivibrio fischeri (strain MJ11)</name>
    <name type="common">Vibrio fischeri</name>
    <dbReference type="NCBI Taxonomy" id="388396"/>
    <lineage>
        <taxon>Bacteria</taxon>
        <taxon>Pseudomonadati</taxon>
        <taxon>Pseudomonadota</taxon>
        <taxon>Gammaproteobacteria</taxon>
        <taxon>Vibrionales</taxon>
        <taxon>Vibrionaceae</taxon>
        <taxon>Aliivibrio</taxon>
    </lineage>
</organism>
<feature type="chain" id="PRO_1000092322" description="N-acetylmuramic acid 6-phosphate etherase">
    <location>
        <begin position="1"/>
        <end position="300"/>
    </location>
</feature>
<feature type="domain" description="SIS" evidence="1">
    <location>
        <begin position="57"/>
        <end position="220"/>
    </location>
</feature>
<feature type="active site" description="Proton donor" evidence="1">
    <location>
        <position position="85"/>
    </location>
</feature>
<feature type="active site" evidence="1">
    <location>
        <position position="116"/>
    </location>
</feature>
<evidence type="ECO:0000255" key="1">
    <source>
        <dbReference type="HAMAP-Rule" id="MF_00068"/>
    </source>
</evidence>
<comment type="function">
    <text evidence="1">Specifically catalyzes the cleavage of the D-lactyl ether substituent of MurNAc 6-phosphate, producing GlcNAc 6-phosphate and D-lactate. Together with AnmK, is also required for the utilization of anhydro-N-acetylmuramic acid (anhMurNAc) either imported from the medium or derived from its own cell wall murein, and thus plays a role in cell wall recycling.</text>
</comment>
<comment type="catalytic activity">
    <reaction evidence="1">
        <text>N-acetyl-D-muramate 6-phosphate + H2O = N-acetyl-D-glucosamine 6-phosphate + (R)-lactate</text>
        <dbReference type="Rhea" id="RHEA:26410"/>
        <dbReference type="ChEBI" id="CHEBI:15377"/>
        <dbReference type="ChEBI" id="CHEBI:16004"/>
        <dbReference type="ChEBI" id="CHEBI:57513"/>
        <dbReference type="ChEBI" id="CHEBI:58722"/>
        <dbReference type="EC" id="4.2.1.126"/>
    </reaction>
</comment>
<comment type="pathway">
    <text evidence="1">Amino-sugar metabolism; 1,6-anhydro-N-acetylmuramate degradation.</text>
</comment>
<comment type="pathway">
    <text evidence="1">Amino-sugar metabolism; N-acetylmuramate degradation.</text>
</comment>
<comment type="pathway">
    <text evidence="1">Cell wall biogenesis; peptidoglycan recycling.</text>
</comment>
<comment type="subunit">
    <text evidence="1">Homodimer.</text>
</comment>
<comment type="miscellaneous">
    <text evidence="1">A lyase-type mechanism (elimination/hydration) is suggested for the cleavage of the lactyl ether bond of MurNAc 6-phosphate, with the formation of an alpha,beta-unsaturated aldehyde intermediate with (E)-stereochemistry, followed by the syn addition of water to give product.</text>
</comment>
<comment type="similarity">
    <text evidence="1">Belongs to the GCKR-like family. MurNAc-6-P etherase subfamily.</text>
</comment>